<sequence length="147" mass="16277">MKVIFQQDVKGKGKKGEVKNVSEGYARNYLIPNGLAVEATSANMKNLNAKKKSEEKKKEEELQEAKAYQTELEALTLELKAKSGEGGRLFGAISTKQIAEALSREGKKVDKRKILLNDPIRSLGYTNVPIKIHPEVTATVKVHVVEE</sequence>
<dbReference type="EMBL" id="BA000004">
    <property type="protein sequence ID" value="BAB07749.1"/>
    <property type="molecule type" value="Genomic_DNA"/>
</dbReference>
<dbReference type="PIR" id="F84153">
    <property type="entry name" value="F84153"/>
</dbReference>
<dbReference type="RefSeq" id="WP_010900154.1">
    <property type="nucleotide sequence ID" value="NC_002570.2"/>
</dbReference>
<dbReference type="SMR" id="Q9K5Q8"/>
<dbReference type="STRING" id="272558.gene:10729948"/>
<dbReference type="KEGG" id="bha:BH4030"/>
<dbReference type="eggNOG" id="COG0359">
    <property type="taxonomic scope" value="Bacteria"/>
</dbReference>
<dbReference type="HOGENOM" id="CLU_078938_3_2_9"/>
<dbReference type="OrthoDB" id="9788336at2"/>
<dbReference type="Proteomes" id="UP000001258">
    <property type="component" value="Chromosome"/>
</dbReference>
<dbReference type="GO" id="GO:1990904">
    <property type="term" value="C:ribonucleoprotein complex"/>
    <property type="evidence" value="ECO:0007669"/>
    <property type="project" value="UniProtKB-KW"/>
</dbReference>
<dbReference type="GO" id="GO:0005840">
    <property type="term" value="C:ribosome"/>
    <property type="evidence" value="ECO:0007669"/>
    <property type="project" value="UniProtKB-KW"/>
</dbReference>
<dbReference type="GO" id="GO:0019843">
    <property type="term" value="F:rRNA binding"/>
    <property type="evidence" value="ECO:0007669"/>
    <property type="project" value="UniProtKB-UniRule"/>
</dbReference>
<dbReference type="GO" id="GO:0003735">
    <property type="term" value="F:structural constituent of ribosome"/>
    <property type="evidence" value="ECO:0007669"/>
    <property type="project" value="InterPro"/>
</dbReference>
<dbReference type="GO" id="GO:0006412">
    <property type="term" value="P:translation"/>
    <property type="evidence" value="ECO:0007669"/>
    <property type="project" value="UniProtKB-UniRule"/>
</dbReference>
<dbReference type="FunFam" id="3.10.430.100:FF:000002">
    <property type="entry name" value="50S ribosomal protein L9"/>
    <property type="match status" value="1"/>
</dbReference>
<dbReference type="FunFam" id="3.40.5.10:FF:000002">
    <property type="entry name" value="50S ribosomal protein L9"/>
    <property type="match status" value="1"/>
</dbReference>
<dbReference type="Gene3D" id="3.10.430.100">
    <property type="entry name" value="Ribosomal protein L9, C-terminal domain"/>
    <property type="match status" value="1"/>
</dbReference>
<dbReference type="Gene3D" id="3.40.5.10">
    <property type="entry name" value="Ribosomal protein L9, N-terminal domain"/>
    <property type="match status" value="1"/>
</dbReference>
<dbReference type="HAMAP" id="MF_00503">
    <property type="entry name" value="Ribosomal_bL9"/>
    <property type="match status" value="1"/>
</dbReference>
<dbReference type="InterPro" id="IPR000244">
    <property type="entry name" value="Ribosomal_bL9"/>
</dbReference>
<dbReference type="InterPro" id="IPR009027">
    <property type="entry name" value="Ribosomal_bL9/RNase_H1_N"/>
</dbReference>
<dbReference type="InterPro" id="IPR020594">
    <property type="entry name" value="Ribosomal_bL9_bac/chp"/>
</dbReference>
<dbReference type="InterPro" id="IPR020069">
    <property type="entry name" value="Ribosomal_bL9_C"/>
</dbReference>
<dbReference type="InterPro" id="IPR036791">
    <property type="entry name" value="Ribosomal_bL9_C_sf"/>
</dbReference>
<dbReference type="InterPro" id="IPR020070">
    <property type="entry name" value="Ribosomal_bL9_N"/>
</dbReference>
<dbReference type="InterPro" id="IPR036935">
    <property type="entry name" value="Ribosomal_bL9_N_sf"/>
</dbReference>
<dbReference type="NCBIfam" id="TIGR00158">
    <property type="entry name" value="L9"/>
    <property type="match status" value="1"/>
</dbReference>
<dbReference type="PANTHER" id="PTHR21368">
    <property type="entry name" value="50S RIBOSOMAL PROTEIN L9"/>
    <property type="match status" value="1"/>
</dbReference>
<dbReference type="Pfam" id="PF03948">
    <property type="entry name" value="Ribosomal_L9_C"/>
    <property type="match status" value="1"/>
</dbReference>
<dbReference type="Pfam" id="PF01281">
    <property type="entry name" value="Ribosomal_L9_N"/>
    <property type="match status" value="1"/>
</dbReference>
<dbReference type="SUPFAM" id="SSF55658">
    <property type="entry name" value="L9 N-domain-like"/>
    <property type="match status" value="1"/>
</dbReference>
<dbReference type="SUPFAM" id="SSF55653">
    <property type="entry name" value="Ribosomal protein L9 C-domain"/>
    <property type="match status" value="1"/>
</dbReference>
<dbReference type="PROSITE" id="PS00651">
    <property type="entry name" value="RIBOSOMAL_L9"/>
    <property type="match status" value="1"/>
</dbReference>
<organism>
    <name type="scientific">Halalkalibacterium halodurans (strain ATCC BAA-125 / DSM 18197 / FERM 7344 / JCM 9153 / C-125)</name>
    <name type="common">Bacillus halodurans</name>
    <dbReference type="NCBI Taxonomy" id="272558"/>
    <lineage>
        <taxon>Bacteria</taxon>
        <taxon>Bacillati</taxon>
        <taxon>Bacillota</taxon>
        <taxon>Bacilli</taxon>
        <taxon>Bacillales</taxon>
        <taxon>Bacillaceae</taxon>
        <taxon>Halalkalibacterium (ex Joshi et al. 2022)</taxon>
    </lineage>
</organism>
<name>RL9_HALH5</name>
<keyword id="KW-1185">Reference proteome</keyword>
<keyword id="KW-0687">Ribonucleoprotein</keyword>
<keyword id="KW-0689">Ribosomal protein</keyword>
<keyword id="KW-0694">RNA-binding</keyword>
<keyword id="KW-0699">rRNA-binding</keyword>
<proteinExistence type="inferred from homology"/>
<gene>
    <name evidence="1" type="primary">rplI</name>
    <name type="ordered locus">BH4030</name>
</gene>
<protein>
    <recommendedName>
        <fullName evidence="1">Large ribosomal subunit protein bL9</fullName>
    </recommendedName>
    <alternativeName>
        <fullName evidence="2">50S ribosomal protein L9</fullName>
    </alternativeName>
</protein>
<reference key="1">
    <citation type="journal article" date="2000" name="Nucleic Acids Res.">
        <title>Complete genome sequence of the alkaliphilic bacterium Bacillus halodurans and genomic sequence comparison with Bacillus subtilis.</title>
        <authorList>
            <person name="Takami H."/>
            <person name="Nakasone K."/>
            <person name="Takaki Y."/>
            <person name="Maeno G."/>
            <person name="Sasaki R."/>
            <person name="Masui N."/>
            <person name="Fuji F."/>
            <person name="Hirama C."/>
            <person name="Nakamura Y."/>
            <person name="Ogasawara N."/>
            <person name="Kuhara S."/>
            <person name="Horikoshi K."/>
        </authorList>
    </citation>
    <scope>NUCLEOTIDE SEQUENCE [LARGE SCALE GENOMIC DNA]</scope>
    <source>
        <strain>ATCC BAA-125 / DSM 18197 / FERM 7344 / JCM 9153 / C-125</strain>
    </source>
</reference>
<accession>Q9K5Q8</accession>
<comment type="function">
    <text evidence="1">Binds to the 23S rRNA.</text>
</comment>
<comment type="similarity">
    <text evidence="1">Belongs to the bacterial ribosomal protein bL9 family.</text>
</comment>
<evidence type="ECO:0000255" key="1">
    <source>
        <dbReference type="HAMAP-Rule" id="MF_00503"/>
    </source>
</evidence>
<evidence type="ECO:0000305" key="2"/>
<feature type="chain" id="PRO_0000176616" description="Large ribosomal subunit protein bL9">
    <location>
        <begin position="1"/>
        <end position="147"/>
    </location>
</feature>